<sequence>MDLLSCTVNDAEIFSLVKKEVLSLNTNDYTTAISLSNRLKINKKKINQQLYKLQKEDTVKMVPSNPPKWFKNYNCDNGEKHDSKLEQKNHIPNHIFSDTVPYKKIINWKDKNPCIVLNEYCQFTCRDWSIDITTSGKSHCPMFTATVIISGIKFKPAIGNTKREAKYNASKITMDEILDSVIIKF</sequence>
<comment type="function">
    <text evidence="1">RNA-binding protein that plays a role in the inhibition of multiple cellular antiviral responses activated by double-stranded RNA (dsRNA), such as inhibition of PKR activation, necroptosis, and IFN-mediated antiviral activities (By similarity). Recognizes and binds Z-RNA structures via its Z-binding domain and dsRNA via its DRBM domain: RNA-binding activity is required to escape host ZBP1-dependent necroptosis (By similarity). Mechanistically, the Z-binding domain binds Z-RNAs that are produced during Yaba-like disease virus infection, thereby competing with Z-RNA detection by host ZBP1, suppressing ZBP1-dependent necroptosis (By similarity).</text>
</comment>
<comment type="domain">
    <text evidence="4">The Z-binding domain recognizes and binds Z-nucleic acid structures.</text>
</comment>
<comment type="similarity">
    <text evidence="7">Belongs to the poxviridae E3 protein family.</text>
</comment>
<comment type="caution">
    <text evidence="1 4">Binds Z-DNA structures in vitro (PubMed:15448208). However, it probably binds Z-RNA in vivo (By similarity).</text>
</comment>
<evidence type="ECO:0000250" key="1">
    <source>
        <dbReference type="UniProtKB" id="P21605"/>
    </source>
</evidence>
<evidence type="ECO:0000255" key="2">
    <source>
        <dbReference type="PROSITE-ProRule" id="PRU00073"/>
    </source>
</evidence>
<evidence type="ECO:0000255" key="3">
    <source>
        <dbReference type="PROSITE-ProRule" id="PRU00266"/>
    </source>
</evidence>
<evidence type="ECO:0000269" key="4">
    <source>
    </source>
</evidence>
<evidence type="ECO:0000303" key="5">
    <source>
    </source>
</evidence>
<evidence type="ECO:0000303" key="6">
    <source>
    </source>
</evidence>
<evidence type="ECO:0000305" key="7"/>
<evidence type="ECO:0007744" key="8">
    <source>
        <dbReference type="PDB" id="1SFU"/>
    </source>
</evidence>
<evidence type="ECO:0007829" key="9">
    <source>
        <dbReference type="PDB" id="1SFU"/>
    </source>
</evidence>
<organism>
    <name type="scientific">Yaba-like disease virus</name>
    <name type="common">YLDV</name>
    <dbReference type="NCBI Taxonomy" id="132475"/>
    <lineage>
        <taxon>Viruses</taxon>
        <taxon>Varidnaviria</taxon>
        <taxon>Bamfordvirae</taxon>
        <taxon>Nucleocytoviricota</taxon>
        <taxon>Pokkesviricetes</taxon>
        <taxon>Chitovirales</taxon>
        <taxon>Poxviridae</taxon>
        <taxon>Chordopoxvirinae</taxon>
        <taxon>Yatapoxvirus</taxon>
        <taxon>Tanapox virus</taxon>
    </lineage>
</organism>
<dbReference type="EMBL" id="AJ293568">
    <property type="protein sequence ID" value="CAC21272.1"/>
    <property type="molecule type" value="Genomic_DNA"/>
</dbReference>
<dbReference type="RefSeq" id="NP_073419.1">
    <property type="nucleotide sequence ID" value="NC_002642.1"/>
</dbReference>
<dbReference type="PDB" id="1SFU">
    <property type="method" value="X-ray"/>
    <property type="resolution" value="2.00 A"/>
    <property type="chains" value="A/B=1-75"/>
</dbReference>
<dbReference type="PDBsum" id="1SFU"/>
<dbReference type="SMR" id="Q9DHS8"/>
<dbReference type="GeneID" id="918721"/>
<dbReference type="KEGG" id="vg:918721"/>
<dbReference type="OrthoDB" id="18174at10239"/>
<dbReference type="EvolutionaryTrace" id="Q9DHS8"/>
<dbReference type="Proteomes" id="UP000136581">
    <property type="component" value="Genome"/>
</dbReference>
<dbReference type="GO" id="GO:0003726">
    <property type="term" value="F:double-stranded RNA adenosine deaminase activity"/>
    <property type="evidence" value="ECO:0007669"/>
    <property type="project" value="InterPro"/>
</dbReference>
<dbReference type="GO" id="GO:0030291">
    <property type="term" value="F:protein serine/threonine kinase inhibitor activity"/>
    <property type="evidence" value="ECO:0007669"/>
    <property type="project" value="UniProtKB-KW"/>
</dbReference>
<dbReference type="GO" id="GO:0003723">
    <property type="term" value="F:RNA binding"/>
    <property type="evidence" value="ECO:0007669"/>
    <property type="project" value="UniProtKB-KW"/>
</dbReference>
<dbReference type="GO" id="GO:0052150">
    <property type="term" value="P:symbiont-mediated perturbation of host apoptosis"/>
    <property type="evidence" value="ECO:0007669"/>
    <property type="project" value="UniProtKB-KW"/>
</dbReference>
<dbReference type="GO" id="GO:0039548">
    <property type="term" value="P:symbiont-mediated suppression of host cytoplasmic pattern recognition receptor signaling pathway via inhibition of IRF3 activity"/>
    <property type="evidence" value="ECO:0007669"/>
    <property type="project" value="UniProtKB-KW"/>
</dbReference>
<dbReference type="GO" id="GO:0039557">
    <property type="term" value="P:symbiont-mediated suppression of host cytoplasmic pattern recognition receptor signaling pathway via inhibition of IRF7 activity"/>
    <property type="evidence" value="ECO:0007669"/>
    <property type="project" value="UniProtKB-KW"/>
</dbReference>
<dbReference type="GO" id="GO:0039580">
    <property type="term" value="P:symbiont-mediated suppression of host PKR/eIFalpha signaling"/>
    <property type="evidence" value="ECO:0007669"/>
    <property type="project" value="UniProtKB-KW"/>
</dbReference>
<dbReference type="GO" id="GO:0039502">
    <property type="term" value="P:symbiont-mediated suppression of host type I interferon-mediated signaling pathway"/>
    <property type="evidence" value="ECO:0007669"/>
    <property type="project" value="UniProtKB-KW"/>
</dbReference>
<dbReference type="CDD" id="cd19875">
    <property type="entry name" value="DSRM_EIF2AK2-like"/>
    <property type="match status" value="1"/>
</dbReference>
<dbReference type="Gene3D" id="3.30.160.20">
    <property type="match status" value="1"/>
</dbReference>
<dbReference type="Gene3D" id="1.10.10.10">
    <property type="entry name" value="Winged helix-like DNA-binding domain superfamily/Winged helix DNA-binding domain"/>
    <property type="match status" value="1"/>
</dbReference>
<dbReference type="InterPro" id="IPR014720">
    <property type="entry name" value="dsRBD_dom"/>
</dbReference>
<dbReference type="InterPro" id="IPR009179">
    <property type="entry name" value="E3L"/>
</dbReference>
<dbReference type="InterPro" id="IPR036388">
    <property type="entry name" value="WH-like_DNA-bd_sf"/>
</dbReference>
<dbReference type="InterPro" id="IPR036390">
    <property type="entry name" value="WH_DNA-bd_sf"/>
</dbReference>
<dbReference type="InterPro" id="IPR042371">
    <property type="entry name" value="Z_dom"/>
</dbReference>
<dbReference type="Pfam" id="PF00035">
    <property type="entry name" value="dsrm"/>
    <property type="match status" value="1"/>
</dbReference>
<dbReference type="Pfam" id="PF02295">
    <property type="entry name" value="z-alpha"/>
    <property type="match status" value="1"/>
</dbReference>
<dbReference type="PIRSF" id="PIRSF004008">
    <property type="entry name" value="VAC_E3L"/>
    <property type="match status" value="1"/>
</dbReference>
<dbReference type="SMART" id="SM00358">
    <property type="entry name" value="DSRM"/>
    <property type="match status" value="1"/>
</dbReference>
<dbReference type="SUPFAM" id="SSF54768">
    <property type="entry name" value="dsRNA-binding domain-like"/>
    <property type="match status" value="1"/>
</dbReference>
<dbReference type="SUPFAM" id="SSF46785">
    <property type="entry name" value="Winged helix' DNA-binding domain"/>
    <property type="match status" value="1"/>
</dbReference>
<dbReference type="PROSITE" id="PS50137">
    <property type="entry name" value="DS_RBD"/>
    <property type="match status" value="1"/>
</dbReference>
<dbReference type="PROSITE" id="PS50139">
    <property type="entry name" value="Z_BINDING"/>
    <property type="match status" value="1"/>
</dbReference>
<gene>
    <name evidence="5" type="ordered locus">34L</name>
</gene>
<reference key="1">
    <citation type="journal article" date="2001" name="Virology">
        <title>The genome sequence of Yaba-like disease virus, a yatapoxvirus.</title>
        <authorList>
            <person name="Lee H.-J."/>
            <person name="Essani K."/>
            <person name="Smith G.L."/>
        </authorList>
    </citation>
    <scope>NUCLEOTIDE SEQUENCE [LARGE SCALE GENOMIC DNA]</scope>
</reference>
<reference evidence="8" key="2">
    <citation type="journal article" date="2004" name="Proc. Natl. Acad. Sci. U.S.A.">
        <title>A poxvirus protein forms a complex with left-handed Z-DNA: crystal structure of a Yatapoxvirus Zalpha bound to DNA.</title>
        <authorList>
            <person name="Ha S.C."/>
            <person name="Lokanath N.K."/>
            <person name="Van Quyen D."/>
            <person name="Wu C.A."/>
            <person name="Lowenhaupt K."/>
            <person name="Rich A."/>
            <person name="Kim Y.G."/>
            <person name="Kim K.K."/>
        </authorList>
    </citation>
    <scope>X-RAY CRYSTALLOGRAPHY (2.00 ANGSTROMS) OF 1-75 IN COMPLEX WITH DNA</scope>
</reference>
<protein>
    <recommendedName>
        <fullName evidence="7">Protein E3 homolog</fullName>
    </recommendedName>
    <alternativeName>
        <fullName evidence="6">Protein E3L homolog</fullName>
    </alternativeName>
</protein>
<accession>Q9DHS8</accession>
<proteinExistence type="evidence at protein level"/>
<keyword id="KW-0002">3D-structure</keyword>
<keyword id="KW-0945">Host-virus interaction</keyword>
<keyword id="KW-1090">Inhibition of host innate immune response by virus</keyword>
<keyword id="KW-1114">Inhibition of host interferon signaling pathway by virus</keyword>
<keyword id="KW-1092">Inhibition of host IRF3 by virus</keyword>
<keyword id="KW-1093">Inhibition of host IRF7 by virus</keyword>
<keyword id="KW-1102">Inhibition of host PKR by virus</keyword>
<keyword id="KW-1113">Inhibition of host RLR pathway by virus</keyword>
<keyword id="KW-0922">Interferon antiviral system evasion</keyword>
<keyword id="KW-1119">Modulation of host cell apoptosis by virus</keyword>
<keyword id="KW-0694">RNA-binding</keyword>
<keyword id="KW-0899">Viral immunoevasion</keyword>
<feature type="chain" id="PRO_0000454582" description="Protein E3 homolog">
    <location>
        <begin position="1"/>
        <end position="185"/>
    </location>
</feature>
<feature type="domain" description="Z-binding" evidence="2">
    <location>
        <begin position="7"/>
        <end position="73"/>
    </location>
</feature>
<feature type="domain" description="DRBM" evidence="3">
    <location>
        <begin position="112"/>
        <end position="179"/>
    </location>
</feature>
<feature type="helix" evidence="9">
    <location>
        <begin position="11"/>
        <end position="22"/>
    </location>
</feature>
<feature type="helix" evidence="9">
    <location>
        <begin position="32"/>
        <end position="38"/>
    </location>
</feature>
<feature type="helix" evidence="9">
    <location>
        <begin position="43"/>
        <end position="55"/>
    </location>
</feature>
<feature type="strand" evidence="9">
    <location>
        <begin position="58"/>
        <end position="62"/>
    </location>
</feature>
<feature type="strand" evidence="9">
    <location>
        <begin position="68"/>
        <end position="71"/>
    </location>
</feature>
<organismHost>
    <name type="scientific">Homo sapiens</name>
    <name type="common">Human</name>
    <dbReference type="NCBI Taxonomy" id="9606"/>
</organismHost>
<organismHost>
    <name type="scientific">Simiiformes</name>
    <dbReference type="NCBI Taxonomy" id="314293"/>
</organismHost>
<name>E3_YLDV</name>